<reference key="1">
    <citation type="journal article" date="2004" name="Genomics">
        <title>Alpha-synuclein A53T substitution associated with Parkinson disease also marks the divergence of Old World and New World primates.</title>
        <authorList>
            <person name="Hamilton B.A."/>
        </authorList>
    </citation>
    <scope>NUCLEOTIDE SEQUENCE [GENOMIC DNA]</scope>
</reference>
<gene>
    <name type="primary">SNCA</name>
</gene>
<protein>
    <recommendedName>
        <fullName>Alpha-synuclein</fullName>
    </recommendedName>
</protein>
<comment type="function">
    <text evidence="4">Neuronal protein that plays several roles in synaptic activity such as regulation of synaptic vesicle trafficking and subsequent neurotransmitter release (By similarity). Participates as a monomer in synaptic vesicle exocytosis by enhancing vesicle priming, fusion and dilation of exocytotic fusion pores (By similarity). Mechanistically, acts by increasing local Ca(2+) release from microdomains which is essential for the enhancement of ATP-induced exocytosis (By similarity). Also acts as a molecular chaperone in its multimeric membrane-bound state, assisting in the folding of synaptic fusion components called SNAREs (Soluble NSF Attachment Protein REceptors) at presynaptic plasma membrane in conjunction with cysteine string protein-alpha/DNAJC5 (By similarity). This chaperone activity is important to sustain normal SNARE-complex assembly during aging (By similarity). Also plays a role in the regulation of the dopamine neurotransmission by associating with the dopamine transporter (DAT1) and thereby modulating its activity (By similarity).</text>
</comment>
<comment type="subunit">
    <text evidence="2 3 4">Soluble monomer. Homotetramer. A dynamic intracellular population of tetramers and monomers coexists normally and the tetramer plays an essential role in maintaining homeostasis (By similarity). Interacts with UCHL1 (By similarity). Interacts with phospholipase D and histones. Interacts (via N-terminus) with synphilin-1/SNCAIP; this interaction promotes formation of SNCA inclusions in the cytoplasm. Interacts with CALM1. Interacts with STXBP1; this interaction controls SNCA self-replicating aggregation. Interacts with SNARE components VAMP2 and SNAP25; these interactions allows SNARE complex assembly and integrity (By similarity). Interacts with RPH3A and RAB3A (By similarity). Interacts with SERF1A; this interaction promotes the aggregation of SNCA (By similarity). Interacts with SEPTIN4 (By similarity). Interacts with DDX10; this interaction causes DDX10 mislocalization to the nucleoplasm and cytoplasmic inclusions (By similarity).</text>
</comment>
<comment type="subcellular location">
    <subcellularLocation>
        <location evidence="4">Cytoplasm</location>
    </subcellularLocation>
    <subcellularLocation>
        <location evidence="4">Membrane</location>
    </subcellularLocation>
    <subcellularLocation>
        <location evidence="4">Nucleus</location>
    </subcellularLocation>
    <subcellularLocation>
        <location evidence="4">Synapse</location>
    </subcellularLocation>
    <subcellularLocation>
        <location evidence="4">Secreted</location>
    </subcellularLocation>
    <subcellularLocation>
        <location evidence="2">Cell projection</location>
        <location evidence="2">Axon</location>
    </subcellularLocation>
    <text evidence="2 4">Membrane-bound in dopaminergic neurons (By similarity). Expressed and colocalized with SEPTIN4 in dopaminergic axon terminals, especially at the varicosities (By similarity).</text>
</comment>
<comment type="PTM">
    <text evidence="4">Phosphorylated, predominantly on serine residues. Phosphorylated on Tyr-125 upon osmotic stress.</text>
</comment>
<comment type="PTM">
    <text evidence="3">Ubiquitinated. The predominant conjugate is the diubiquitinated form.</text>
</comment>
<comment type="PTM">
    <text evidence="4">Acetylation at Met-1 seems to be important for proper folding and native oligomeric structure.</text>
</comment>
<comment type="similarity">
    <text evidence="6">Belongs to the synuclein family.</text>
</comment>
<evidence type="ECO:0000250" key="1"/>
<evidence type="ECO:0000250" key="2">
    <source>
        <dbReference type="UniProtKB" id="O55042"/>
    </source>
</evidence>
<evidence type="ECO:0000250" key="3">
    <source>
        <dbReference type="UniProtKB" id="P37377"/>
    </source>
</evidence>
<evidence type="ECO:0000250" key="4">
    <source>
        <dbReference type="UniProtKB" id="P37840"/>
    </source>
</evidence>
<evidence type="ECO:0000256" key="5">
    <source>
        <dbReference type="SAM" id="MobiDB-lite"/>
    </source>
</evidence>
<evidence type="ECO:0000305" key="6"/>
<sequence>MDVFMKGLSKAKEGVVAAAEKTKQGVAEAAGKTKEGVLYVGSKTKEGVVHGVATVAEKTKEQVTNVGGAVVTGVTAVAQKTVEGAGSIAAATGFVKKDQLGKNEEGAPQEGILEDMPVDPDNEAYEMPSEEGYQDYEPEA</sequence>
<dbReference type="EMBL" id="AY362299">
    <property type="protein sequence ID" value="AAQ85068.1"/>
    <property type="molecule type" value="Genomic_DNA"/>
</dbReference>
<dbReference type="EMBL" id="AY362295">
    <property type="protein sequence ID" value="AAQ85068.1"/>
    <property type="status" value="JOINED"/>
    <property type="molecule type" value="Genomic_DNA"/>
</dbReference>
<dbReference type="EMBL" id="AY362296">
    <property type="protein sequence ID" value="AAQ85068.1"/>
    <property type="status" value="JOINED"/>
    <property type="molecule type" value="Genomic_DNA"/>
</dbReference>
<dbReference type="EMBL" id="AY362297">
    <property type="protein sequence ID" value="AAQ85068.1"/>
    <property type="status" value="JOINED"/>
    <property type="molecule type" value="Genomic_DNA"/>
</dbReference>
<dbReference type="EMBL" id="AY362298">
    <property type="protein sequence ID" value="AAQ85068.1"/>
    <property type="status" value="JOINED"/>
    <property type="molecule type" value="Genomic_DNA"/>
</dbReference>
<dbReference type="RefSeq" id="XP_003829936.1">
    <property type="nucleotide sequence ID" value="XM_003829888.5"/>
</dbReference>
<dbReference type="RefSeq" id="XP_003829937.1">
    <property type="nucleotide sequence ID" value="XM_003829889.7"/>
</dbReference>
<dbReference type="RefSeq" id="XP_003829938.1">
    <property type="nucleotide sequence ID" value="XM_003829890.5"/>
</dbReference>
<dbReference type="RefSeq" id="XP_008953542.1">
    <property type="nucleotide sequence ID" value="XM_008955294.4"/>
</dbReference>
<dbReference type="SMR" id="P61144"/>
<dbReference type="STRING" id="9597.ENSPPAP00000006465"/>
<dbReference type="Ensembl" id="ENSPPAT00000027770.1">
    <property type="protein sequence ID" value="ENSPPAP00000006465.1"/>
    <property type="gene ID" value="ENSPPAG00000025110.1"/>
</dbReference>
<dbReference type="GeneID" id="100984304"/>
<dbReference type="KEGG" id="pps:100984304"/>
<dbReference type="CTD" id="6622"/>
<dbReference type="eggNOG" id="ENOG502S0Q7">
    <property type="taxonomic scope" value="Eukaryota"/>
</dbReference>
<dbReference type="GeneTree" id="ENSGT00950000183175"/>
<dbReference type="OMA" id="LPQEGMM"/>
<dbReference type="OrthoDB" id="16349at9604"/>
<dbReference type="Proteomes" id="UP000240080">
    <property type="component" value="Chromosome 4"/>
</dbReference>
<dbReference type="Bgee" id="ENSPPAG00000025110">
    <property type="expression patterns" value="Expressed in prefrontal cortex and 6 other cell types or tissues"/>
</dbReference>
<dbReference type="GO" id="GO:0015629">
    <property type="term" value="C:actin cytoskeleton"/>
    <property type="evidence" value="ECO:0007669"/>
    <property type="project" value="Ensembl"/>
</dbReference>
<dbReference type="GO" id="GO:0043679">
    <property type="term" value="C:axon terminus"/>
    <property type="evidence" value="ECO:0007669"/>
    <property type="project" value="Ensembl"/>
</dbReference>
<dbReference type="GO" id="GO:0005938">
    <property type="term" value="C:cell cortex"/>
    <property type="evidence" value="ECO:0007669"/>
    <property type="project" value="Ensembl"/>
</dbReference>
<dbReference type="GO" id="GO:0005829">
    <property type="term" value="C:cytosol"/>
    <property type="evidence" value="ECO:0000250"/>
    <property type="project" value="UniProtKB"/>
</dbReference>
<dbReference type="GO" id="GO:0005615">
    <property type="term" value="C:extracellular space"/>
    <property type="evidence" value="ECO:0000250"/>
    <property type="project" value="UniProtKB"/>
</dbReference>
<dbReference type="GO" id="GO:0030426">
    <property type="term" value="C:growth cone"/>
    <property type="evidence" value="ECO:0007669"/>
    <property type="project" value="Ensembl"/>
</dbReference>
<dbReference type="GO" id="GO:0016234">
    <property type="term" value="C:inclusion body"/>
    <property type="evidence" value="ECO:0007669"/>
    <property type="project" value="Ensembl"/>
</dbReference>
<dbReference type="GO" id="GO:0016020">
    <property type="term" value="C:membrane"/>
    <property type="evidence" value="ECO:0000250"/>
    <property type="project" value="UniProtKB"/>
</dbReference>
<dbReference type="GO" id="GO:0005739">
    <property type="term" value="C:mitochondrion"/>
    <property type="evidence" value="ECO:0007669"/>
    <property type="project" value="GOC"/>
</dbReference>
<dbReference type="GO" id="GO:0043025">
    <property type="term" value="C:neuronal cell body"/>
    <property type="evidence" value="ECO:0007669"/>
    <property type="project" value="Ensembl"/>
</dbReference>
<dbReference type="GO" id="GO:0005634">
    <property type="term" value="C:nucleus"/>
    <property type="evidence" value="ECO:0000250"/>
    <property type="project" value="UniProtKB"/>
</dbReference>
<dbReference type="GO" id="GO:0048471">
    <property type="term" value="C:perinuclear region of cytoplasm"/>
    <property type="evidence" value="ECO:0007669"/>
    <property type="project" value="Ensembl"/>
</dbReference>
<dbReference type="GO" id="GO:0005886">
    <property type="term" value="C:plasma membrane"/>
    <property type="evidence" value="ECO:0007669"/>
    <property type="project" value="Ensembl"/>
</dbReference>
<dbReference type="GO" id="GO:0031092">
    <property type="term" value="C:platelet alpha granule membrane"/>
    <property type="evidence" value="ECO:0007669"/>
    <property type="project" value="Ensembl"/>
</dbReference>
<dbReference type="GO" id="GO:0098794">
    <property type="term" value="C:postsynapse"/>
    <property type="evidence" value="ECO:0007669"/>
    <property type="project" value="GOC"/>
</dbReference>
<dbReference type="GO" id="GO:0032991">
    <property type="term" value="C:protein-containing complex"/>
    <property type="evidence" value="ECO:0007669"/>
    <property type="project" value="Ensembl"/>
</dbReference>
<dbReference type="GO" id="GO:0099512">
    <property type="term" value="C:supramolecular fiber"/>
    <property type="evidence" value="ECO:0007669"/>
    <property type="project" value="Ensembl"/>
</dbReference>
<dbReference type="GO" id="GO:0030672">
    <property type="term" value="C:synaptic vesicle membrane"/>
    <property type="evidence" value="ECO:0007669"/>
    <property type="project" value="Ensembl"/>
</dbReference>
<dbReference type="GO" id="GO:0003779">
    <property type="term" value="F:actin binding"/>
    <property type="evidence" value="ECO:0007669"/>
    <property type="project" value="Ensembl"/>
</dbReference>
<dbReference type="GO" id="GO:0043014">
    <property type="term" value="F:alpha-tubulin binding"/>
    <property type="evidence" value="ECO:0007669"/>
    <property type="project" value="Ensembl"/>
</dbReference>
<dbReference type="GO" id="GO:0050544">
    <property type="term" value="F:arachidonate binding"/>
    <property type="evidence" value="ECO:0007669"/>
    <property type="project" value="Ensembl"/>
</dbReference>
<dbReference type="GO" id="GO:0005509">
    <property type="term" value="F:calcium ion binding"/>
    <property type="evidence" value="ECO:0007669"/>
    <property type="project" value="Ensembl"/>
</dbReference>
<dbReference type="GO" id="GO:0005507">
    <property type="term" value="F:copper ion binding"/>
    <property type="evidence" value="ECO:0000250"/>
    <property type="project" value="UniProtKB"/>
</dbReference>
<dbReference type="GO" id="GO:1903136">
    <property type="term" value="F:cuprous ion binding"/>
    <property type="evidence" value="ECO:0007669"/>
    <property type="project" value="Ensembl"/>
</dbReference>
<dbReference type="GO" id="GO:0004869">
    <property type="term" value="F:cysteine-type endopeptidase inhibitor activity"/>
    <property type="evidence" value="ECO:0007669"/>
    <property type="project" value="Ensembl"/>
</dbReference>
<dbReference type="GO" id="GO:0070840">
    <property type="term" value="F:dynein complex binding"/>
    <property type="evidence" value="ECO:0007669"/>
    <property type="project" value="Ensembl"/>
</dbReference>
<dbReference type="GO" id="GO:0008198">
    <property type="term" value="F:ferrous iron binding"/>
    <property type="evidence" value="ECO:0007669"/>
    <property type="project" value="Ensembl"/>
</dbReference>
<dbReference type="GO" id="GO:0042393">
    <property type="term" value="F:histone binding"/>
    <property type="evidence" value="ECO:0007669"/>
    <property type="project" value="Ensembl"/>
</dbReference>
<dbReference type="GO" id="GO:0030544">
    <property type="term" value="F:Hsp70 protein binding"/>
    <property type="evidence" value="ECO:0007669"/>
    <property type="project" value="Ensembl"/>
</dbReference>
<dbReference type="GO" id="GO:0042802">
    <property type="term" value="F:identical protein binding"/>
    <property type="evidence" value="ECO:0000250"/>
    <property type="project" value="UniProtKB"/>
</dbReference>
<dbReference type="GO" id="GO:0019894">
    <property type="term" value="F:kinesin binding"/>
    <property type="evidence" value="ECO:0007669"/>
    <property type="project" value="Ensembl"/>
</dbReference>
<dbReference type="GO" id="GO:0000287">
    <property type="term" value="F:magnesium ion binding"/>
    <property type="evidence" value="ECO:0007669"/>
    <property type="project" value="Ensembl"/>
</dbReference>
<dbReference type="GO" id="GO:0016491">
    <property type="term" value="F:oxidoreductase activity"/>
    <property type="evidence" value="ECO:0007669"/>
    <property type="project" value="Ensembl"/>
</dbReference>
<dbReference type="GO" id="GO:0005543">
    <property type="term" value="F:phospholipid binding"/>
    <property type="evidence" value="ECO:0007669"/>
    <property type="project" value="Ensembl"/>
</dbReference>
<dbReference type="GO" id="GO:0051219">
    <property type="term" value="F:phosphoprotein binding"/>
    <property type="evidence" value="ECO:0007669"/>
    <property type="project" value="Ensembl"/>
</dbReference>
<dbReference type="GO" id="GO:0000149">
    <property type="term" value="F:SNARE binding"/>
    <property type="evidence" value="ECO:0007669"/>
    <property type="project" value="Ensembl"/>
</dbReference>
<dbReference type="GO" id="GO:0048156">
    <property type="term" value="F:tau protein binding"/>
    <property type="evidence" value="ECO:0007669"/>
    <property type="project" value="Ensembl"/>
</dbReference>
<dbReference type="GO" id="GO:0141108">
    <property type="term" value="F:transporter regulator activity"/>
    <property type="evidence" value="ECO:0007669"/>
    <property type="project" value="Ensembl"/>
</dbReference>
<dbReference type="GO" id="GO:0008270">
    <property type="term" value="F:zinc ion binding"/>
    <property type="evidence" value="ECO:0007669"/>
    <property type="project" value="Ensembl"/>
</dbReference>
<dbReference type="GO" id="GO:0008344">
    <property type="term" value="P:adult locomotory behavior"/>
    <property type="evidence" value="ECO:0007669"/>
    <property type="project" value="Ensembl"/>
</dbReference>
<dbReference type="GO" id="GO:0071280">
    <property type="term" value="P:cellular response to copper ion"/>
    <property type="evidence" value="ECO:0007669"/>
    <property type="project" value="Ensembl"/>
</dbReference>
<dbReference type="GO" id="GO:0034599">
    <property type="term" value="P:cellular response to oxidative stress"/>
    <property type="evidence" value="ECO:0007669"/>
    <property type="project" value="Ensembl"/>
</dbReference>
<dbReference type="GO" id="GO:0042416">
    <property type="term" value="P:dopamine biosynthetic process"/>
    <property type="evidence" value="ECO:0007669"/>
    <property type="project" value="Ensembl"/>
</dbReference>
<dbReference type="GO" id="GO:0060079">
    <property type="term" value="P:excitatory postsynaptic potential"/>
    <property type="evidence" value="ECO:0007669"/>
    <property type="project" value="Ensembl"/>
</dbReference>
<dbReference type="GO" id="GO:0006631">
    <property type="term" value="P:fatty acid metabolic process"/>
    <property type="evidence" value="ECO:0007669"/>
    <property type="project" value="Ensembl"/>
</dbReference>
<dbReference type="GO" id="GO:0060291">
    <property type="term" value="P:long-term synaptic potentiation"/>
    <property type="evidence" value="ECO:0007669"/>
    <property type="project" value="Ensembl"/>
</dbReference>
<dbReference type="GO" id="GO:0001774">
    <property type="term" value="P:microglial cell activation"/>
    <property type="evidence" value="ECO:0007669"/>
    <property type="project" value="Ensembl"/>
</dbReference>
<dbReference type="GO" id="GO:0042775">
    <property type="term" value="P:mitochondrial ATP synthesis coupled electron transport"/>
    <property type="evidence" value="ECO:0007669"/>
    <property type="project" value="Ensembl"/>
</dbReference>
<dbReference type="GO" id="GO:0007006">
    <property type="term" value="P:mitochondrial membrane organization"/>
    <property type="evidence" value="ECO:0007669"/>
    <property type="project" value="Ensembl"/>
</dbReference>
<dbReference type="GO" id="GO:1904715">
    <property type="term" value="P:negative regulation of chaperone-mediated autophagy"/>
    <property type="evidence" value="ECO:0007669"/>
    <property type="project" value="Ensembl"/>
</dbReference>
<dbReference type="GO" id="GO:0051585">
    <property type="term" value="P:negative regulation of dopamine uptake involved in synaptic transmission"/>
    <property type="evidence" value="ECO:0007669"/>
    <property type="project" value="Ensembl"/>
</dbReference>
<dbReference type="GO" id="GO:0045920">
    <property type="term" value="P:negative regulation of exocytosis"/>
    <property type="evidence" value="ECO:0007669"/>
    <property type="project" value="Ensembl"/>
</dbReference>
<dbReference type="GO" id="GO:0031115">
    <property type="term" value="P:negative regulation of microtubule polymerization"/>
    <property type="evidence" value="ECO:0007669"/>
    <property type="project" value="Ensembl"/>
</dbReference>
<dbReference type="GO" id="GO:0043524">
    <property type="term" value="P:negative regulation of neuron apoptotic process"/>
    <property type="evidence" value="ECO:0007669"/>
    <property type="project" value="Ensembl"/>
</dbReference>
<dbReference type="GO" id="GO:0051622">
    <property type="term" value="P:negative regulation of norepinephrine uptake"/>
    <property type="evidence" value="ECO:0007669"/>
    <property type="project" value="Ensembl"/>
</dbReference>
<dbReference type="GO" id="GO:0010642">
    <property type="term" value="P:negative regulation of platelet-derived growth factor receptor signaling pathway"/>
    <property type="evidence" value="ECO:0007669"/>
    <property type="project" value="Ensembl"/>
</dbReference>
<dbReference type="GO" id="GO:0051612">
    <property type="term" value="P:negative regulation of serotonin uptake"/>
    <property type="evidence" value="ECO:0007669"/>
    <property type="project" value="Ensembl"/>
</dbReference>
<dbReference type="GO" id="GO:0070495">
    <property type="term" value="P:negative regulation of thrombin-activated receptor signaling pathway"/>
    <property type="evidence" value="ECO:0007669"/>
    <property type="project" value="Ensembl"/>
</dbReference>
<dbReference type="GO" id="GO:0051402">
    <property type="term" value="P:neuron apoptotic process"/>
    <property type="evidence" value="ECO:0007669"/>
    <property type="project" value="Ensembl"/>
</dbReference>
<dbReference type="GO" id="GO:0006638">
    <property type="term" value="P:neutral lipid metabolic process"/>
    <property type="evidence" value="ECO:0007669"/>
    <property type="project" value="Ensembl"/>
</dbReference>
<dbReference type="GO" id="GO:0006644">
    <property type="term" value="P:phospholipid metabolic process"/>
    <property type="evidence" value="ECO:0007669"/>
    <property type="project" value="Ensembl"/>
</dbReference>
<dbReference type="GO" id="GO:0045807">
    <property type="term" value="P:positive regulation of endocytosis"/>
    <property type="evidence" value="ECO:0007669"/>
    <property type="project" value="Ensembl"/>
</dbReference>
<dbReference type="GO" id="GO:0045921">
    <property type="term" value="P:positive regulation of exocytosis"/>
    <property type="evidence" value="ECO:0007669"/>
    <property type="project" value="Ensembl"/>
</dbReference>
<dbReference type="GO" id="GO:1903285">
    <property type="term" value="P:positive regulation of hydrogen peroxide catabolic process"/>
    <property type="evidence" value="ECO:0007669"/>
    <property type="project" value="Ensembl"/>
</dbReference>
<dbReference type="GO" id="GO:0050729">
    <property type="term" value="P:positive regulation of inflammatory response"/>
    <property type="evidence" value="ECO:0007669"/>
    <property type="project" value="Ensembl"/>
</dbReference>
<dbReference type="GO" id="GO:0060732">
    <property type="term" value="P:positive regulation of inositol phosphate biosynthetic process"/>
    <property type="evidence" value="ECO:0007669"/>
    <property type="project" value="Ensembl"/>
</dbReference>
<dbReference type="GO" id="GO:0001956">
    <property type="term" value="P:positive regulation of neurotransmitter secretion"/>
    <property type="evidence" value="ECO:0007669"/>
    <property type="project" value="Ensembl"/>
</dbReference>
<dbReference type="GO" id="GO:1904377">
    <property type="term" value="P:positive regulation of protein localization to cell periphery"/>
    <property type="evidence" value="ECO:0007669"/>
    <property type="project" value="Ensembl"/>
</dbReference>
<dbReference type="GO" id="GO:0001921">
    <property type="term" value="P:positive regulation of receptor recycling"/>
    <property type="evidence" value="ECO:0007669"/>
    <property type="project" value="Ensembl"/>
</dbReference>
<dbReference type="GO" id="GO:0051281">
    <property type="term" value="P:positive regulation of release of sequestered calcium ion into cytosol"/>
    <property type="evidence" value="ECO:0007669"/>
    <property type="project" value="Ensembl"/>
</dbReference>
<dbReference type="GO" id="GO:0035543">
    <property type="term" value="P:positive regulation of SNARE complex assembly"/>
    <property type="evidence" value="ECO:0007669"/>
    <property type="project" value="Ensembl"/>
</dbReference>
<dbReference type="GO" id="GO:0031648">
    <property type="term" value="P:protein destabilization"/>
    <property type="evidence" value="ECO:0007669"/>
    <property type="project" value="Ensembl"/>
</dbReference>
<dbReference type="GO" id="GO:0051262">
    <property type="term" value="P:protein tetramerization"/>
    <property type="evidence" value="ECO:0007669"/>
    <property type="project" value="Ensembl"/>
</dbReference>
<dbReference type="GO" id="GO:0031623">
    <property type="term" value="P:receptor internalization"/>
    <property type="evidence" value="ECO:0007669"/>
    <property type="project" value="Ensembl"/>
</dbReference>
<dbReference type="GO" id="GO:0050812">
    <property type="term" value="P:regulation of acyl-CoA biosynthetic process"/>
    <property type="evidence" value="ECO:0007669"/>
    <property type="project" value="Ensembl"/>
</dbReference>
<dbReference type="GO" id="GO:0014059">
    <property type="term" value="P:regulation of dopamine secretion"/>
    <property type="evidence" value="ECO:0007669"/>
    <property type="project" value="Ensembl"/>
</dbReference>
<dbReference type="GO" id="GO:0014048">
    <property type="term" value="P:regulation of glutamate secretion"/>
    <property type="evidence" value="ECO:0007669"/>
    <property type="project" value="Ensembl"/>
</dbReference>
<dbReference type="GO" id="GO:0040012">
    <property type="term" value="P:regulation of locomotion"/>
    <property type="evidence" value="ECO:0007669"/>
    <property type="project" value="Ensembl"/>
</dbReference>
<dbReference type="GO" id="GO:0048169">
    <property type="term" value="P:regulation of long-term neuronal synaptic plasticity"/>
    <property type="evidence" value="ECO:0007669"/>
    <property type="project" value="Ensembl"/>
</dbReference>
<dbReference type="GO" id="GO:0043030">
    <property type="term" value="P:regulation of macrophage activation"/>
    <property type="evidence" value="ECO:0007669"/>
    <property type="project" value="Ensembl"/>
</dbReference>
<dbReference type="GO" id="GO:1905606">
    <property type="term" value="P:regulation of presynapse assembly"/>
    <property type="evidence" value="ECO:0007669"/>
    <property type="project" value="Ensembl"/>
</dbReference>
<dbReference type="GO" id="GO:0070555">
    <property type="term" value="P:response to interleukin-1"/>
    <property type="evidence" value="ECO:0007669"/>
    <property type="project" value="Ensembl"/>
</dbReference>
<dbReference type="GO" id="GO:0010040">
    <property type="term" value="P:response to iron(II) ion"/>
    <property type="evidence" value="ECO:0007669"/>
    <property type="project" value="Ensembl"/>
</dbReference>
<dbReference type="GO" id="GO:0032496">
    <property type="term" value="P:response to lipopolysaccharide"/>
    <property type="evidence" value="ECO:0007669"/>
    <property type="project" value="Ensembl"/>
</dbReference>
<dbReference type="GO" id="GO:0032026">
    <property type="term" value="P:response to magnesium ion"/>
    <property type="evidence" value="ECO:0007669"/>
    <property type="project" value="Ensembl"/>
</dbReference>
<dbReference type="GO" id="GO:0034341">
    <property type="term" value="P:response to type II interferon"/>
    <property type="evidence" value="ECO:0007669"/>
    <property type="project" value="Ensembl"/>
</dbReference>
<dbReference type="GO" id="GO:0009410">
    <property type="term" value="P:response to xenobiotic stimulus"/>
    <property type="evidence" value="ECO:0007669"/>
    <property type="project" value="Ensembl"/>
</dbReference>
<dbReference type="GO" id="GO:0035493">
    <property type="term" value="P:SNARE complex assembly"/>
    <property type="evidence" value="ECO:0007669"/>
    <property type="project" value="Ensembl"/>
</dbReference>
<dbReference type="GO" id="GO:0050808">
    <property type="term" value="P:synapse organization"/>
    <property type="evidence" value="ECO:0007669"/>
    <property type="project" value="Ensembl"/>
</dbReference>
<dbReference type="GO" id="GO:0001963">
    <property type="term" value="P:synaptic transmission, dopaminergic"/>
    <property type="evidence" value="ECO:0007669"/>
    <property type="project" value="Ensembl"/>
</dbReference>
<dbReference type="GO" id="GO:0048488">
    <property type="term" value="P:synaptic vesicle endocytosis"/>
    <property type="evidence" value="ECO:0007669"/>
    <property type="project" value="Ensembl"/>
</dbReference>
<dbReference type="GO" id="GO:0016082">
    <property type="term" value="P:synaptic vesicle priming"/>
    <property type="evidence" value="ECO:0007669"/>
    <property type="project" value="Ensembl"/>
</dbReference>
<dbReference type="GO" id="GO:0048489">
    <property type="term" value="P:synaptic vesicle transport"/>
    <property type="evidence" value="ECO:0007669"/>
    <property type="project" value="Ensembl"/>
</dbReference>
<dbReference type="FunFam" id="1.10.287.700:FF:000001">
    <property type="entry name" value="Alpha-synuclein"/>
    <property type="match status" value="1"/>
</dbReference>
<dbReference type="Gene3D" id="1.10.287.700">
    <property type="entry name" value="Helix hairpin bin"/>
    <property type="match status" value="1"/>
</dbReference>
<dbReference type="InterPro" id="IPR001058">
    <property type="entry name" value="Synuclein"/>
</dbReference>
<dbReference type="InterPro" id="IPR002460">
    <property type="entry name" value="Synuclein_alpha"/>
</dbReference>
<dbReference type="PANTHER" id="PTHR13820:SF5">
    <property type="entry name" value="ALPHA-SYNUCLEIN"/>
    <property type="match status" value="1"/>
</dbReference>
<dbReference type="PANTHER" id="PTHR13820">
    <property type="entry name" value="SYNUCLEIN"/>
    <property type="match status" value="1"/>
</dbReference>
<dbReference type="Pfam" id="PF01387">
    <property type="entry name" value="Synuclein"/>
    <property type="match status" value="1"/>
</dbReference>
<dbReference type="PRINTS" id="PR01212">
    <property type="entry name" value="ASYNUCLEIN"/>
</dbReference>
<dbReference type="PRINTS" id="PR01211">
    <property type="entry name" value="SYNUCLEIN"/>
</dbReference>
<dbReference type="SUPFAM" id="SSF118375">
    <property type="entry name" value="Synuclein"/>
    <property type="match status" value="1"/>
</dbReference>
<proteinExistence type="inferred from homology"/>
<name>SYUA_PANPA</name>
<organism>
    <name type="scientific">Pan paniscus</name>
    <name type="common">Pygmy chimpanzee</name>
    <name type="synonym">Bonobo</name>
    <dbReference type="NCBI Taxonomy" id="9597"/>
    <lineage>
        <taxon>Eukaryota</taxon>
        <taxon>Metazoa</taxon>
        <taxon>Chordata</taxon>
        <taxon>Craniata</taxon>
        <taxon>Vertebrata</taxon>
        <taxon>Euteleostomi</taxon>
        <taxon>Mammalia</taxon>
        <taxon>Eutheria</taxon>
        <taxon>Euarchontoglires</taxon>
        <taxon>Primates</taxon>
        <taxon>Haplorrhini</taxon>
        <taxon>Catarrhini</taxon>
        <taxon>Hominidae</taxon>
        <taxon>Pan</taxon>
    </lineage>
</organism>
<feature type="chain" id="PRO_0000184027" description="Alpha-synuclein">
    <location>
        <begin position="1"/>
        <end position="140"/>
    </location>
</feature>
<feature type="region of interest" description="Disordered" evidence="5">
    <location>
        <begin position="100"/>
        <end position="140"/>
    </location>
</feature>
<feature type="region of interest" description="Interaction with SERF1A" evidence="4">
    <location>
        <begin position="111"/>
        <end position="140"/>
    </location>
</feature>
<feature type="compositionally biased region" description="Acidic residues" evidence="5">
    <location>
        <begin position="112"/>
        <end position="140"/>
    </location>
</feature>
<feature type="binding site" evidence="1">
    <location>
        <position position="2"/>
    </location>
    <ligand>
        <name>Cu cation</name>
        <dbReference type="ChEBI" id="CHEBI:23378"/>
    </ligand>
</feature>
<feature type="binding site" evidence="1">
    <location>
        <position position="50"/>
    </location>
    <ligand>
        <name>Cu cation</name>
        <dbReference type="ChEBI" id="CHEBI:23378"/>
    </ligand>
</feature>
<feature type="modified residue" description="N-acetylmethionine" evidence="4">
    <location>
        <position position="1"/>
    </location>
</feature>
<feature type="modified residue" description="Phosphoserine" evidence="4">
    <location>
        <position position="87"/>
    </location>
</feature>
<feature type="modified residue" description="Phosphotyrosine; by FYN" evidence="4">
    <location>
        <position position="125"/>
    </location>
</feature>
<feature type="modified residue" description="Phosphoserine; by PLK2" evidence="4">
    <location>
        <position position="129"/>
    </location>
</feature>
<keyword id="KW-0007">Acetylation</keyword>
<keyword id="KW-0966">Cell projection</keyword>
<keyword id="KW-0186">Copper</keyword>
<keyword id="KW-0963">Cytoplasm</keyword>
<keyword id="KW-0472">Membrane</keyword>
<keyword id="KW-0479">Metal-binding</keyword>
<keyword id="KW-0539">Nucleus</keyword>
<keyword id="KW-0597">Phosphoprotein</keyword>
<keyword id="KW-1185">Reference proteome</keyword>
<keyword id="KW-0677">Repeat</keyword>
<keyword id="KW-0964">Secreted</keyword>
<keyword id="KW-0770">Synapse</keyword>
<keyword id="KW-0832">Ubl conjugation</keyword>
<accession>P61144</accession>